<name>ISPH_NOSS1</name>
<feature type="chain" id="PRO_0000128765" description="4-hydroxy-3-methylbut-2-enyl diphosphate reductase">
    <location>
        <begin position="1"/>
        <end position="402"/>
    </location>
</feature>
<feature type="active site" description="Proton donor" evidence="1">
    <location>
        <position position="187"/>
    </location>
</feature>
<feature type="binding site" evidence="1">
    <location>
        <position position="66"/>
    </location>
    <ligand>
        <name>[4Fe-4S] cluster</name>
        <dbReference type="ChEBI" id="CHEBI:49883"/>
    </ligand>
</feature>
<feature type="binding site" evidence="1">
    <location>
        <position position="96"/>
    </location>
    <ligand>
        <name>(2E)-4-hydroxy-3-methylbut-2-enyl diphosphate</name>
        <dbReference type="ChEBI" id="CHEBI:128753"/>
    </ligand>
</feature>
<feature type="binding site" evidence="1">
    <location>
        <position position="96"/>
    </location>
    <ligand>
        <name>dimethylallyl diphosphate</name>
        <dbReference type="ChEBI" id="CHEBI:57623"/>
    </ligand>
</feature>
<feature type="binding site" evidence="1">
    <location>
        <position position="96"/>
    </location>
    <ligand>
        <name>isopentenyl diphosphate</name>
        <dbReference type="ChEBI" id="CHEBI:128769"/>
    </ligand>
</feature>
<feature type="binding site" evidence="1">
    <location>
        <position position="157"/>
    </location>
    <ligand>
        <name>[4Fe-4S] cluster</name>
        <dbReference type="ChEBI" id="CHEBI:49883"/>
    </ligand>
</feature>
<feature type="binding site" evidence="1">
    <location>
        <position position="185"/>
    </location>
    <ligand>
        <name>(2E)-4-hydroxy-3-methylbut-2-enyl diphosphate</name>
        <dbReference type="ChEBI" id="CHEBI:128753"/>
    </ligand>
</feature>
<feature type="binding site" evidence="1">
    <location>
        <position position="185"/>
    </location>
    <ligand>
        <name>dimethylallyl diphosphate</name>
        <dbReference type="ChEBI" id="CHEBI:57623"/>
    </ligand>
</feature>
<feature type="binding site" evidence="1">
    <location>
        <position position="185"/>
    </location>
    <ligand>
        <name>isopentenyl diphosphate</name>
        <dbReference type="ChEBI" id="CHEBI:128769"/>
    </ligand>
</feature>
<feature type="binding site" evidence="1">
    <location>
        <position position="250"/>
    </location>
    <ligand>
        <name>(2E)-4-hydroxy-3-methylbut-2-enyl diphosphate</name>
        <dbReference type="ChEBI" id="CHEBI:128753"/>
    </ligand>
</feature>
<feature type="binding site" evidence="1">
    <location>
        <position position="288"/>
    </location>
    <ligand>
        <name>[4Fe-4S] cluster</name>
        <dbReference type="ChEBI" id="CHEBI:49883"/>
    </ligand>
</feature>
<feature type="binding site" evidence="1">
    <location>
        <position position="317"/>
    </location>
    <ligand>
        <name>(2E)-4-hydroxy-3-methylbut-2-enyl diphosphate</name>
        <dbReference type="ChEBI" id="CHEBI:128753"/>
    </ligand>
</feature>
<feature type="binding site" evidence="1">
    <location>
        <position position="317"/>
    </location>
    <ligand>
        <name>dimethylallyl diphosphate</name>
        <dbReference type="ChEBI" id="CHEBI:57623"/>
    </ligand>
</feature>
<feature type="binding site" evidence="1">
    <location>
        <position position="317"/>
    </location>
    <ligand>
        <name>isopentenyl diphosphate</name>
        <dbReference type="ChEBI" id="CHEBI:128769"/>
    </ligand>
</feature>
<feature type="binding site" evidence="1">
    <location>
        <position position="318"/>
    </location>
    <ligand>
        <name>(2E)-4-hydroxy-3-methylbut-2-enyl diphosphate</name>
        <dbReference type="ChEBI" id="CHEBI:128753"/>
    </ligand>
</feature>
<feature type="binding site" evidence="1">
    <location>
        <position position="318"/>
    </location>
    <ligand>
        <name>dimethylallyl diphosphate</name>
        <dbReference type="ChEBI" id="CHEBI:57623"/>
    </ligand>
</feature>
<feature type="binding site" evidence="1">
    <location>
        <position position="318"/>
    </location>
    <ligand>
        <name>isopentenyl diphosphate</name>
        <dbReference type="ChEBI" id="CHEBI:128769"/>
    </ligand>
</feature>
<feature type="binding site" evidence="1">
    <location>
        <position position="319"/>
    </location>
    <ligand>
        <name>(2E)-4-hydroxy-3-methylbut-2-enyl diphosphate</name>
        <dbReference type="ChEBI" id="CHEBI:128753"/>
    </ligand>
</feature>
<feature type="binding site" evidence="1">
    <location>
        <position position="319"/>
    </location>
    <ligand>
        <name>dimethylallyl diphosphate</name>
        <dbReference type="ChEBI" id="CHEBI:57623"/>
    </ligand>
</feature>
<feature type="binding site" evidence="1">
    <location>
        <position position="319"/>
    </location>
    <ligand>
        <name>isopentenyl diphosphate</name>
        <dbReference type="ChEBI" id="CHEBI:128769"/>
    </ligand>
</feature>
<feature type="binding site" evidence="1">
    <location>
        <position position="379"/>
    </location>
    <ligand>
        <name>(2E)-4-hydroxy-3-methylbut-2-enyl diphosphate</name>
        <dbReference type="ChEBI" id="CHEBI:128753"/>
    </ligand>
</feature>
<feature type="binding site" evidence="1">
    <location>
        <position position="379"/>
    </location>
    <ligand>
        <name>dimethylallyl diphosphate</name>
        <dbReference type="ChEBI" id="CHEBI:57623"/>
    </ligand>
</feature>
<feature type="binding site" evidence="1">
    <location>
        <position position="379"/>
    </location>
    <ligand>
        <name>isopentenyl diphosphate</name>
        <dbReference type="ChEBI" id="CHEBI:128769"/>
    </ligand>
</feature>
<dbReference type="EC" id="1.17.7.4" evidence="1"/>
<dbReference type="EMBL" id="BA000019">
    <property type="protein sequence ID" value="BAB72942.1"/>
    <property type="molecule type" value="Genomic_DNA"/>
</dbReference>
<dbReference type="PIR" id="AF1929">
    <property type="entry name" value="AF1929"/>
</dbReference>
<dbReference type="RefSeq" id="WP_010995159.1">
    <property type="nucleotide sequence ID" value="NZ_RSCN01000025.1"/>
</dbReference>
<dbReference type="SMR" id="P58674"/>
<dbReference type="STRING" id="103690.gene:10492999"/>
<dbReference type="KEGG" id="ana:all0985"/>
<dbReference type="eggNOG" id="COG0761">
    <property type="taxonomic scope" value="Bacteria"/>
</dbReference>
<dbReference type="OrthoDB" id="9804077at2"/>
<dbReference type="UniPathway" id="UPA00056">
    <property type="reaction ID" value="UER00097"/>
</dbReference>
<dbReference type="UniPathway" id="UPA00059">
    <property type="reaction ID" value="UER00105"/>
</dbReference>
<dbReference type="Proteomes" id="UP000002483">
    <property type="component" value="Chromosome"/>
</dbReference>
<dbReference type="GO" id="GO:0051539">
    <property type="term" value="F:4 iron, 4 sulfur cluster binding"/>
    <property type="evidence" value="ECO:0007669"/>
    <property type="project" value="UniProtKB-UniRule"/>
</dbReference>
<dbReference type="GO" id="GO:0051745">
    <property type="term" value="F:4-hydroxy-3-methylbut-2-enyl diphosphate reductase activity"/>
    <property type="evidence" value="ECO:0007669"/>
    <property type="project" value="UniProtKB-UniRule"/>
</dbReference>
<dbReference type="GO" id="GO:0046872">
    <property type="term" value="F:metal ion binding"/>
    <property type="evidence" value="ECO:0007669"/>
    <property type="project" value="UniProtKB-KW"/>
</dbReference>
<dbReference type="GO" id="GO:0050992">
    <property type="term" value="P:dimethylallyl diphosphate biosynthetic process"/>
    <property type="evidence" value="ECO:0007669"/>
    <property type="project" value="UniProtKB-UniRule"/>
</dbReference>
<dbReference type="GO" id="GO:0019288">
    <property type="term" value="P:isopentenyl diphosphate biosynthetic process, methylerythritol 4-phosphate pathway"/>
    <property type="evidence" value="ECO:0007669"/>
    <property type="project" value="UniProtKB-UniRule"/>
</dbReference>
<dbReference type="GO" id="GO:0016114">
    <property type="term" value="P:terpenoid biosynthetic process"/>
    <property type="evidence" value="ECO:0007669"/>
    <property type="project" value="UniProtKB-UniRule"/>
</dbReference>
<dbReference type="CDD" id="cd13944">
    <property type="entry name" value="lytB_ispH"/>
    <property type="match status" value="1"/>
</dbReference>
<dbReference type="Gene3D" id="3.40.50.11270">
    <property type="match status" value="1"/>
</dbReference>
<dbReference type="Gene3D" id="3.40.1010.20">
    <property type="entry name" value="4-hydroxy-3-methylbut-2-enyl diphosphate reductase, catalytic domain"/>
    <property type="match status" value="2"/>
</dbReference>
<dbReference type="HAMAP" id="MF_00191">
    <property type="entry name" value="IspH"/>
    <property type="match status" value="1"/>
</dbReference>
<dbReference type="InterPro" id="IPR003451">
    <property type="entry name" value="LytB/IspH"/>
</dbReference>
<dbReference type="NCBIfam" id="TIGR00216">
    <property type="entry name" value="ispH_lytB"/>
    <property type="match status" value="1"/>
</dbReference>
<dbReference type="NCBIfam" id="NF009911">
    <property type="entry name" value="PRK13371.1"/>
    <property type="match status" value="1"/>
</dbReference>
<dbReference type="PANTHER" id="PTHR31619">
    <property type="entry name" value="4-HYDROXY-3-METHYLBUT-2-ENYL DIPHOSPHATE REDUCTASE, CHLOROPLASTIC"/>
    <property type="match status" value="1"/>
</dbReference>
<dbReference type="PANTHER" id="PTHR31619:SF5">
    <property type="entry name" value="4-HYDROXY-3-METHYLBUT-2-ENYL DIPHOSPHATE REDUCTASE, CHLOROPLASTIC"/>
    <property type="match status" value="1"/>
</dbReference>
<dbReference type="Pfam" id="PF02401">
    <property type="entry name" value="LYTB"/>
    <property type="match status" value="1"/>
</dbReference>
<keyword id="KW-0004">4Fe-4S</keyword>
<keyword id="KW-0408">Iron</keyword>
<keyword id="KW-0411">Iron-sulfur</keyword>
<keyword id="KW-0414">Isoprene biosynthesis</keyword>
<keyword id="KW-0479">Metal-binding</keyword>
<keyword id="KW-0560">Oxidoreductase</keyword>
<keyword id="KW-1185">Reference proteome</keyword>
<evidence type="ECO:0000255" key="1">
    <source>
        <dbReference type="HAMAP-Rule" id="MF_00191"/>
    </source>
</evidence>
<sequence length="402" mass="45385">MDTKTFKRTLQHSENYNRKGFGHQAEVATQLQSEYQSSLIQEIRDRNYTLQRGDVTIRLAQAFGFCWGVERAVAMAYETRKHFPTERIWITNEIIHNPSVNQRMQEMQVGFIPVEAGNKDFSVVGNNDVVILPAFGASVQEMQLLSEKGCKIVDTTCPWVSKVWNTVEKHKKGDHTSIIHGKYKHEETIATSSFAGKYLIVLNLKEAQYVADYILHGGNREEFLQKFAKACSAGFDPDRDLERVGIANQTTMLKGETEQIGKLFEHTMLQKYGPVELNQHFQSFNTICDATQERQDAMLELVQENLDLMIVIGGFNSSNTTQLQQISQERGLPSYHIDVVERIKSINSIEHRQLNGELVTTENWLPAGKIVVGVTSGASTPDKVVEDVIEKIFALKATAAVF</sequence>
<reference key="1">
    <citation type="journal article" date="2001" name="DNA Res.">
        <title>Complete genomic sequence of the filamentous nitrogen-fixing cyanobacterium Anabaena sp. strain PCC 7120.</title>
        <authorList>
            <person name="Kaneko T."/>
            <person name="Nakamura Y."/>
            <person name="Wolk C.P."/>
            <person name="Kuritz T."/>
            <person name="Sasamoto S."/>
            <person name="Watanabe A."/>
            <person name="Iriguchi M."/>
            <person name="Ishikawa A."/>
            <person name="Kawashima K."/>
            <person name="Kimura T."/>
            <person name="Kishida Y."/>
            <person name="Kohara M."/>
            <person name="Matsumoto M."/>
            <person name="Matsuno A."/>
            <person name="Muraki A."/>
            <person name="Nakazaki N."/>
            <person name="Shimpo S."/>
            <person name="Sugimoto M."/>
            <person name="Takazawa M."/>
            <person name="Yamada M."/>
            <person name="Yasuda M."/>
            <person name="Tabata S."/>
        </authorList>
    </citation>
    <scope>NUCLEOTIDE SEQUENCE [LARGE SCALE GENOMIC DNA]</scope>
    <source>
        <strain>PCC 7120 / SAG 25.82 / UTEX 2576</strain>
    </source>
</reference>
<organism>
    <name type="scientific">Nostoc sp. (strain PCC 7120 / SAG 25.82 / UTEX 2576)</name>
    <dbReference type="NCBI Taxonomy" id="103690"/>
    <lineage>
        <taxon>Bacteria</taxon>
        <taxon>Bacillati</taxon>
        <taxon>Cyanobacteriota</taxon>
        <taxon>Cyanophyceae</taxon>
        <taxon>Nostocales</taxon>
        <taxon>Nostocaceae</taxon>
        <taxon>Nostoc</taxon>
    </lineage>
</organism>
<protein>
    <recommendedName>
        <fullName evidence="1">4-hydroxy-3-methylbut-2-enyl diphosphate reductase</fullName>
        <shortName evidence="1">HMBPP reductase</shortName>
        <ecNumber evidence="1">1.17.7.4</ecNumber>
    </recommendedName>
</protein>
<comment type="function">
    <text evidence="1">Catalyzes the conversion of 1-hydroxy-2-methyl-2-(E)-butenyl 4-diphosphate (HMBPP) into a mixture of isopentenyl diphosphate (IPP) and dimethylallyl diphosphate (DMAPP). Acts in the terminal step of the DOXP/MEP pathway for isoprenoid precursor biosynthesis.</text>
</comment>
<comment type="catalytic activity">
    <reaction evidence="1">
        <text>isopentenyl diphosphate + 2 oxidized [2Fe-2S]-[ferredoxin] + H2O = (2E)-4-hydroxy-3-methylbut-2-enyl diphosphate + 2 reduced [2Fe-2S]-[ferredoxin] + 2 H(+)</text>
        <dbReference type="Rhea" id="RHEA:24488"/>
        <dbReference type="Rhea" id="RHEA-COMP:10000"/>
        <dbReference type="Rhea" id="RHEA-COMP:10001"/>
        <dbReference type="ChEBI" id="CHEBI:15377"/>
        <dbReference type="ChEBI" id="CHEBI:15378"/>
        <dbReference type="ChEBI" id="CHEBI:33737"/>
        <dbReference type="ChEBI" id="CHEBI:33738"/>
        <dbReference type="ChEBI" id="CHEBI:128753"/>
        <dbReference type="ChEBI" id="CHEBI:128769"/>
        <dbReference type="EC" id="1.17.7.4"/>
    </reaction>
</comment>
<comment type="catalytic activity">
    <reaction evidence="1">
        <text>dimethylallyl diphosphate + 2 oxidized [2Fe-2S]-[ferredoxin] + H2O = (2E)-4-hydroxy-3-methylbut-2-enyl diphosphate + 2 reduced [2Fe-2S]-[ferredoxin] + 2 H(+)</text>
        <dbReference type="Rhea" id="RHEA:24825"/>
        <dbReference type="Rhea" id="RHEA-COMP:10000"/>
        <dbReference type="Rhea" id="RHEA-COMP:10001"/>
        <dbReference type="ChEBI" id="CHEBI:15377"/>
        <dbReference type="ChEBI" id="CHEBI:15378"/>
        <dbReference type="ChEBI" id="CHEBI:33737"/>
        <dbReference type="ChEBI" id="CHEBI:33738"/>
        <dbReference type="ChEBI" id="CHEBI:57623"/>
        <dbReference type="ChEBI" id="CHEBI:128753"/>
        <dbReference type="EC" id="1.17.7.4"/>
    </reaction>
</comment>
<comment type="cofactor">
    <cofactor evidence="1">
        <name>[4Fe-4S] cluster</name>
        <dbReference type="ChEBI" id="CHEBI:49883"/>
    </cofactor>
    <text evidence="1">Binds 1 [4Fe-4S] cluster per subunit.</text>
</comment>
<comment type="pathway">
    <text evidence="1">Isoprenoid biosynthesis; dimethylallyl diphosphate biosynthesis; dimethylallyl diphosphate from (2E)-4-hydroxy-3-methylbutenyl diphosphate: step 1/1.</text>
</comment>
<comment type="pathway">
    <text evidence="1">Isoprenoid biosynthesis; isopentenyl diphosphate biosynthesis via DXP pathway; isopentenyl diphosphate from 1-deoxy-D-xylulose 5-phosphate: step 6/6.</text>
</comment>
<comment type="similarity">
    <text evidence="1">Belongs to the IspH family.</text>
</comment>
<accession>P58674</accession>
<gene>
    <name evidence="1" type="primary">ispH</name>
    <name type="synonym">lytB</name>
    <name type="ordered locus">all0985</name>
</gene>
<proteinExistence type="inferred from homology"/>